<dbReference type="EMBL" id="CP000438">
    <property type="protein sequence ID" value="ABJ12513.1"/>
    <property type="molecule type" value="Genomic_DNA"/>
</dbReference>
<dbReference type="RefSeq" id="WP_003091601.1">
    <property type="nucleotide sequence ID" value="NZ_CP034244.1"/>
</dbReference>
<dbReference type="SMR" id="Q02Q95"/>
<dbReference type="KEGG" id="pau:PA14_21790"/>
<dbReference type="PseudoCAP" id="PA14_21790"/>
<dbReference type="HOGENOM" id="CLU_052038_1_1_6"/>
<dbReference type="BioCyc" id="PAER208963:G1G74-1807-MONOMER"/>
<dbReference type="Proteomes" id="UP000000653">
    <property type="component" value="Chromosome"/>
</dbReference>
<dbReference type="GO" id="GO:0043590">
    <property type="term" value="C:bacterial nucleoid"/>
    <property type="evidence" value="ECO:0007669"/>
    <property type="project" value="TreeGrafter"/>
</dbReference>
<dbReference type="GO" id="GO:0005737">
    <property type="term" value="C:cytoplasm"/>
    <property type="evidence" value="ECO:0007669"/>
    <property type="project" value="UniProtKB-UniRule"/>
</dbReference>
<dbReference type="GO" id="GO:0003690">
    <property type="term" value="F:double-stranded DNA binding"/>
    <property type="evidence" value="ECO:0007669"/>
    <property type="project" value="TreeGrafter"/>
</dbReference>
<dbReference type="GO" id="GO:0006310">
    <property type="term" value="P:DNA recombination"/>
    <property type="evidence" value="ECO:0007669"/>
    <property type="project" value="UniProtKB-UniRule"/>
</dbReference>
<dbReference type="GO" id="GO:0000018">
    <property type="term" value="P:regulation of DNA recombination"/>
    <property type="evidence" value="ECO:0007669"/>
    <property type="project" value="TreeGrafter"/>
</dbReference>
<dbReference type="HAMAP" id="MF_00194">
    <property type="entry name" value="RdgC"/>
    <property type="match status" value="1"/>
</dbReference>
<dbReference type="InterPro" id="IPR007476">
    <property type="entry name" value="RdgC"/>
</dbReference>
<dbReference type="NCBIfam" id="NF001461">
    <property type="entry name" value="PRK00321.1-2"/>
    <property type="match status" value="1"/>
</dbReference>
<dbReference type="NCBIfam" id="NF001462">
    <property type="entry name" value="PRK00321.1-3"/>
    <property type="match status" value="1"/>
</dbReference>
<dbReference type="NCBIfam" id="NF001464">
    <property type="entry name" value="PRK00321.1-5"/>
    <property type="match status" value="1"/>
</dbReference>
<dbReference type="PANTHER" id="PTHR38103">
    <property type="entry name" value="RECOMBINATION-ASSOCIATED PROTEIN RDGC"/>
    <property type="match status" value="1"/>
</dbReference>
<dbReference type="PANTHER" id="PTHR38103:SF1">
    <property type="entry name" value="RECOMBINATION-ASSOCIATED PROTEIN RDGC"/>
    <property type="match status" value="1"/>
</dbReference>
<dbReference type="Pfam" id="PF04381">
    <property type="entry name" value="RdgC"/>
    <property type="match status" value="1"/>
</dbReference>
<reference key="1">
    <citation type="journal article" date="2006" name="Genome Biol.">
        <title>Genomic analysis reveals that Pseudomonas aeruginosa virulence is combinatorial.</title>
        <authorList>
            <person name="Lee D.G."/>
            <person name="Urbach J.M."/>
            <person name="Wu G."/>
            <person name="Liberati N.T."/>
            <person name="Feinbaum R.L."/>
            <person name="Miyata S."/>
            <person name="Diggins L.T."/>
            <person name="He J."/>
            <person name="Saucier M."/>
            <person name="Deziel E."/>
            <person name="Friedman L."/>
            <person name="Li L."/>
            <person name="Grills G."/>
            <person name="Montgomery K."/>
            <person name="Kucherlapati R."/>
            <person name="Rahme L.G."/>
            <person name="Ausubel F.M."/>
        </authorList>
    </citation>
    <scope>NUCLEOTIDE SEQUENCE [LARGE SCALE GENOMIC DNA]</scope>
    <source>
        <strain>UCBPP-PA14</strain>
    </source>
</reference>
<sequence length="306" mass="34025">MWFRNLLVYRLTQDLQLDADSLEKALGEKPARPCASQELTTYGFTAPFGKGPDAPLVHVSQDFFLISARKEERILPGSVVRDALKEKVDEIEAQQMRKVYKKERDQLKDEIVQTLLPRAFIRRSSTFAAIAPSLGLILVDSASAKKAEDLLSTLREALGSLPVRPLSVKVAPTATLTDWVKTQEAAGDFHVLDECELRDTHEDGGVVRCKRQDLTSEEIQLHLTAGKLVTQLSLAWSDKLSFVLDDKLAVKRLRFEDLLQEQAEKDGGEDALGQLDASFTLMMLTFAEFLPALFEALGGEEIPQGV</sequence>
<evidence type="ECO:0000255" key="1">
    <source>
        <dbReference type="HAMAP-Rule" id="MF_00194"/>
    </source>
</evidence>
<feature type="chain" id="PRO_1000021218" description="Recombination-associated protein RdgC">
    <location>
        <begin position="1"/>
        <end position="306"/>
    </location>
</feature>
<accession>Q02Q95</accession>
<name>RDGC_PSEAB</name>
<organism>
    <name type="scientific">Pseudomonas aeruginosa (strain UCBPP-PA14)</name>
    <dbReference type="NCBI Taxonomy" id="208963"/>
    <lineage>
        <taxon>Bacteria</taxon>
        <taxon>Pseudomonadati</taxon>
        <taxon>Pseudomonadota</taxon>
        <taxon>Gammaproteobacteria</taxon>
        <taxon>Pseudomonadales</taxon>
        <taxon>Pseudomonadaceae</taxon>
        <taxon>Pseudomonas</taxon>
    </lineage>
</organism>
<protein>
    <recommendedName>
        <fullName evidence="1">Recombination-associated protein RdgC</fullName>
    </recommendedName>
</protein>
<proteinExistence type="inferred from homology"/>
<comment type="function">
    <text evidence="1">May be involved in recombination.</text>
</comment>
<comment type="subcellular location">
    <subcellularLocation>
        <location evidence="1">Cytoplasm</location>
        <location evidence="1">Nucleoid</location>
    </subcellularLocation>
</comment>
<comment type="similarity">
    <text evidence="1">Belongs to the RdgC family.</text>
</comment>
<gene>
    <name evidence="1" type="primary">rdgC</name>
    <name type="ordered locus">PA14_21790</name>
</gene>
<keyword id="KW-0963">Cytoplasm</keyword>
<keyword id="KW-0233">DNA recombination</keyword>